<sequence>MITRMQIRIQRTHPQAILPTYAHGPAEDAGMDLHAVEDVTLEPGVARLVSTGLTLEVPPGFEAQVRPRSGLALKHAITIPNAPGTIDPGYRGEVRVIMLNLGRDAYTVHAGDRIAQMIVTRYEAVEWLEGSLADSTRGAGGFGSSGR</sequence>
<accession>Q02BZ2</accession>
<gene>
    <name evidence="1" type="primary">dut</name>
    <name type="ordered locus">Acid_0414</name>
</gene>
<protein>
    <recommendedName>
        <fullName evidence="1">Deoxyuridine 5'-triphosphate nucleotidohydrolase</fullName>
        <shortName evidence="1">dUTPase</shortName>
        <ecNumber evidence="1">3.6.1.23</ecNumber>
    </recommendedName>
    <alternativeName>
        <fullName evidence="1">dUTP pyrophosphatase</fullName>
    </alternativeName>
</protein>
<comment type="function">
    <text evidence="1">This enzyme is involved in nucleotide metabolism: it produces dUMP, the immediate precursor of thymidine nucleotides and it decreases the intracellular concentration of dUTP so that uracil cannot be incorporated into DNA.</text>
</comment>
<comment type="catalytic activity">
    <reaction evidence="1">
        <text>dUTP + H2O = dUMP + diphosphate + H(+)</text>
        <dbReference type="Rhea" id="RHEA:10248"/>
        <dbReference type="ChEBI" id="CHEBI:15377"/>
        <dbReference type="ChEBI" id="CHEBI:15378"/>
        <dbReference type="ChEBI" id="CHEBI:33019"/>
        <dbReference type="ChEBI" id="CHEBI:61555"/>
        <dbReference type="ChEBI" id="CHEBI:246422"/>
        <dbReference type="EC" id="3.6.1.23"/>
    </reaction>
</comment>
<comment type="cofactor">
    <cofactor evidence="1">
        <name>Mg(2+)</name>
        <dbReference type="ChEBI" id="CHEBI:18420"/>
    </cofactor>
</comment>
<comment type="pathway">
    <text evidence="1">Pyrimidine metabolism; dUMP biosynthesis; dUMP from dCTP (dUTP route): step 2/2.</text>
</comment>
<comment type="similarity">
    <text evidence="1">Belongs to the dUTPase family.</text>
</comment>
<reference key="1">
    <citation type="journal article" date="2009" name="Appl. Environ. Microbiol.">
        <title>Three genomes from the phylum Acidobacteria provide insight into the lifestyles of these microorganisms in soils.</title>
        <authorList>
            <person name="Ward N.L."/>
            <person name="Challacombe J.F."/>
            <person name="Janssen P.H."/>
            <person name="Henrissat B."/>
            <person name="Coutinho P.M."/>
            <person name="Wu M."/>
            <person name="Xie G."/>
            <person name="Haft D.H."/>
            <person name="Sait M."/>
            <person name="Badger J."/>
            <person name="Barabote R.D."/>
            <person name="Bradley B."/>
            <person name="Brettin T.S."/>
            <person name="Brinkac L.M."/>
            <person name="Bruce D."/>
            <person name="Creasy T."/>
            <person name="Daugherty S.C."/>
            <person name="Davidsen T.M."/>
            <person name="DeBoy R.T."/>
            <person name="Detter J.C."/>
            <person name="Dodson R.J."/>
            <person name="Durkin A.S."/>
            <person name="Ganapathy A."/>
            <person name="Gwinn-Giglio M."/>
            <person name="Han C.S."/>
            <person name="Khouri H."/>
            <person name="Kiss H."/>
            <person name="Kothari S.P."/>
            <person name="Madupu R."/>
            <person name="Nelson K.E."/>
            <person name="Nelson W.C."/>
            <person name="Paulsen I."/>
            <person name="Penn K."/>
            <person name="Ren Q."/>
            <person name="Rosovitz M.J."/>
            <person name="Selengut J.D."/>
            <person name="Shrivastava S."/>
            <person name="Sullivan S.A."/>
            <person name="Tapia R."/>
            <person name="Thompson L.S."/>
            <person name="Watkins K.L."/>
            <person name="Yang Q."/>
            <person name="Yu C."/>
            <person name="Zafar N."/>
            <person name="Zhou L."/>
            <person name="Kuske C.R."/>
        </authorList>
    </citation>
    <scope>NUCLEOTIDE SEQUENCE [LARGE SCALE GENOMIC DNA]</scope>
    <source>
        <strain>Ellin6076</strain>
    </source>
</reference>
<dbReference type="EC" id="3.6.1.23" evidence="1"/>
<dbReference type="EMBL" id="CP000473">
    <property type="protein sequence ID" value="ABJ81424.1"/>
    <property type="molecule type" value="Genomic_DNA"/>
</dbReference>
<dbReference type="SMR" id="Q02BZ2"/>
<dbReference type="FunCoup" id="Q02BZ2">
    <property type="interactions" value="485"/>
</dbReference>
<dbReference type="STRING" id="234267.Acid_0414"/>
<dbReference type="KEGG" id="sus:Acid_0414"/>
<dbReference type="eggNOG" id="COG0756">
    <property type="taxonomic scope" value="Bacteria"/>
</dbReference>
<dbReference type="HOGENOM" id="CLU_068508_1_2_0"/>
<dbReference type="InParanoid" id="Q02BZ2"/>
<dbReference type="OrthoDB" id="9809956at2"/>
<dbReference type="UniPathway" id="UPA00610">
    <property type="reaction ID" value="UER00666"/>
</dbReference>
<dbReference type="GO" id="GO:0004170">
    <property type="term" value="F:dUTP diphosphatase activity"/>
    <property type="evidence" value="ECO:0007669"/>
    <property type="project" value="UniProtKB-UniRule"/>
</dbReference>
<dbReference type="GO" id="GO:0000287">
    <property type="term" value="F:magnesium ion binding"/>
    <property type="evidence" value="ECO:0007669"/>
    <property type="project" value="UniProtKB-UniRule"/>
</dbReference>
<dbReference type="GO" id="GO:0006226">
    <property type="term" value="P:dUMP biosynthetic process"/>
    <property type="evidence" value="ECO:0007669"/>
    <property type="project" value="UniProtKB-UniRule"/>
</dbReference>
<dbReference type="GO" id="GO:0046081">
    <property type="term" value="P:dUTP catabolic process"/>
    <property type="evidence" value="ECO:0007669"/>
    <property type="project" value="InterPro"/>
</dbReference>
<dbReference type="CDD" id="cd07557">
    <property type="entry name" value="trimeric_dUTPase"/>
    <property type="match status" value="1"/>
</dbReference>
<dbReference type="Gene3D" id="2.70.40.10">
    <property type="match status" value="1"/>
</dbReference>
<dbReference type="HAMAP" id="MF_00116">
    <property type="entry name" value="dUTPase_bact"/>
    <property type="match status" value="1"/>
</dbReference>
<dbReference type="InterPro" id="IPR008181">
    <property type="entry name" value="dUTPase"/>
</dbReference>
<dbReference type="InterPro" id="IPR029054">
    <property type="entry name" value="dUTPase-like"/>
</dbReference>
<dbReference type="InterPro" id="IPR036157">
    <property type="entry name" value="dUTPase-like_sf"/>
</dbReference>
<dbReference type="InterPro" id="IPR033704">
    <property type="entry name" value="dUTPase_trimeric"/>
</dbReference>
<dbReference type="NCBIfam" id="TIGR00576">
    <property type="entry name" value="dut"/>
    <property type="match status" value="1"/>
</dbReference>
<dbReference type="NCBIfam" id="NF001862">
    <property type="entry name" value="PRK00601.1"/>
    <property type="match status" value="1"/>
</dbReference>
<dbReference type="PANTHER" id="PTHR11241">
    <property type="entry name" value="DEOXYURIDINE 5'-TRIPHOSPHATE NUCLEOTIDOHYDROLASE"/>
    <property type="match status" value="1"/>
</dbReference>
<dbReference type="PANTHER" id="PTHR11241:SF0">
    <property type="entry name" value="DEOXYURIDINE 5'-TRIPHOSPHATE NUCLEOTIDOHYDROLASE"/>
    <property type="match status" value="1"/>
</dbReference>
<dbReference type="Pfam" id="PF00692">
    <property type="entry name" value="dUTPase"/>
    <property type="match status" value="1"/>
</dbReference>
<dbReference type="SUPFAM" id="SSF51283">
    <property type="entry name" value="dUTPase-like"/>
    <property type="match status" value="1"/>
</dbReference>
<keyword id="KW-0378">Hydrolase</keyword>
<keyword id="KW-0460">Magnesium</keyword>
<keyword id="KW-0479">Metal-binding</keyword>
<keyword id="KW-0546">Nucleotide metabolism</keyword>
<proteinExistence type="inferred from homology"/>
<organism>
    <name type="scientific">Solibacter usitatus (strain Ellin6076)</name>
    <dbReference type="NCBI Taxonomy" id="234267"/>
    <lineage>
        <taxon>Bacteria</taxon>
        <taxon>Pseudomonadati</taxon>
        <taxon>Acidobacteriota</taxon>
        <taxon>Terriglobia</taxon>
        <taxon>Bryobacterales</taxon>
        <taxon>Solibacteraceae</taxon>
        <taxon>Candidatus Solibacter</taxon>
    </lineage>
</organism>
<feature type="chain" id="PRO_1000015524" description="Deoxyuridine 5'-triphosphate nucleotidohydrolase">
    <location>
        <begin position="1"/>
        <end position="147"/>
    </location>
</feature>
<feature type="binding site" evidence="1">
    <location>
        <begin position="68"/>
        <end position="70"/>
    </location>
    <ligand>
        <name>substrate</name>
    </ligand>
</feature>
<feature type="binding site" evidence="1">
    <location>
        <position position="81"/>
    </location>
    <ligand>
        <name>substrate</name>
    </ligand>
</feature>
<feature type="binding site" evidence="1">
    <location>
        <begin position="85"/>
        <end position="87"/>
    </location>
    <ligand>
        <name>substrate</name>
    </ligand>
</feature>
<name>DUT_SOLUE</name>
<evidence type="ECO:0000255" key="1">
    <source>
        <dbReference type="HAMAP-Rule" id="MF_00116"/>
    </source>
</evidence>